<gene>
    <name evidence="1" type="primary">pyrC</name>
    <name type="ordered locus">Pput_1127</name>
</gene>
<comment type="function">
    <text evidence="1">Catalyzes the reversible cyclization of carbamoyl aspartate to dihydroorotate.</text>
</comment>
<comment type="catalytic activity">
    <reaction evidence="1">
        <text>(S)-dihydroorotate + H2O = N-carbamoyl-L-aspartate + H(+)</text>
        <dbReference type="Rhea" id="RHEA:24296"/>
        <dbReference type="ChEBI" id="CHEBI:15377"/>
        <dbReference type="ChEBI" id="CHEBI:15378"/>
        <dbReference type="ChEBI" id="CHEBI:30864"/>
        <dbReference type="ChEBI" id="CHEBI:32814"/>
        <dbReference type="EC" id="3.5.2.3"/>
    </reaction>
</comment>
<comment type="cofactor">
    <cofactor evidence="1">
        <name>Zn(2+)</name>
        <dbReference type="ChEBI" id="CHEBI:29105"/>
    </cofactor>
    <text evidence="1">Binds 2 Zn(2+) ions per subunit.</text>
</comment>
<comment type="pathway">
    <text evidence="1">Pyrimidine metabolism; UMP biosynthesis via de novo pathway; (S)-dihydroorotate from bicarbonate: step 3/3.</text>
</comment>
<comment type="subunit">
    <text evidence="1">Homodimer.</text>
</comment>
<comment type="similarity">
    <text evidence="1">Belongs to the metallo-dependent hydrolases superfamily. DHOase family. Class II DHOase subfamily.</text>
</comment>
<evidence type="ECO:0000255" key="1">
    <source>
        <dbReference type="HAMAP-Rule" id="MF_00219"/>
    </source>
</evidence>
<feature type="chain" id="PRO_1000024037" description="Dihydroorotase">
    <location>
        <begin position="1"/>
        <end position="348"/>
    </location>
</feature>
<feature type="active site" evidence="1">
    <location>
        <position position="248"/>
    </location>
</feature>
<feature type="binding site" evidence="1">
    <location>
        <position position="14"/>
    </location>
    <ligand>
        <name>Zn(2+)</name>
        <dbReference type="ChEBI" id="CHEBI:29105"/>
        <label>1</label>
    </ligand>
</feature>
<feature type="binding site" evidence="1">
    <location>
        <begin position="16"/>
        <end position="18"/>
    </location>
    <ligand>
        <name>substrate</name>
    </ligand>
</feature>
<feature type="binding site" evidence="1">
    <location>
        <position position="16"/>
    </location>
    <ligand>
        <name>Zn(2+)</name>
        <dbReference type="ChEBI" id="CHEBI:29105"/>
        <label>1</label>
    </ligand>
</feature>
<feature type="binding site" evidence="1">
    <location>
        <position position="42"/>
    </location>
    <ligand>
        <name>substrate</name>
    </ligand>
</feature>
<feature type="binding site" description="via carbamate group" evidence="1">
    <location>
        <position position="100"/>
    </location>
    <ligand>
        <name>Zn(2+)</name>
        <dbReference type="ChEBI" id="CHEBI:29105"/>
        <label>1</label>
    </ligand>
</feature>
<feature type="binding site" description="via carbamate group" evidence="1">
    <location>
        <position position="100"/>
    </location>
    <ligand>
        <name>Zn(2+)</name>
        <dbReference type="ChEBI" id="CHEBI:29105"/>
        <label>2</label>
    </ligand>
</feature>
<feature type="binding site" evidence="1">
    <location>
        <position position="137"/>
    </location>
    <ligand>
        <name>substrate</name>
    </ligand>
</feature>
<feature type="binding site" evidence="1">
    <location>
        <position position="137"/>
    </location>
    <ligand>
        <name>Zn(2+)</name>
        <dbReference type="ChEBI" id="CHEBI:29105"/>
        <label>2</label>
    </ligand>
</feature>
<feature type="binding site" evidence="1">
    <location>
        <position position="175"/>
    </location>
    <ligand>
        <name>Zn(2+)</name>
        <dbReference type="ChEBI" id="CHEBI:29105"/>
        <label>2</label>
    </ligand>
</feature>
<feature type="binding site" evidence="1">
    <location>
        <position position="220"/>
    </location>
    <ligand>
        <name>substrate</name>
    </ligand>
</feature>
<feature type="binding site" evidence="1">
    <location>
        <position position="248"/>
    </location>
    <ligand>
        <name>Zn(2+)</name>
        <dbReference type="ChEBI" id="CHEBI:29105"/>
        <label>1</label>
    </ligand>
</feature>
<feature type="binding site" evidence="1">
    <location>
        <position position="252"/>
    </location>
    <ligand>
        <name>substrate</name>
    </ligand>
</feature>
<feature type="binding site" evidence="1">
    <location>
        <position position="264"/>
    </location>
    <ligand>
        <name>substrate</name>
    </ligand>
</feature>
<feature type="modified residue" description="N6-carboxylysine" evidence="1">
    <location>
        <position position="100"/>
    </location>
</feature>
<name>PYRC_PSEP1</name>
<proteinExistence type="inferred from homology"/>
<accession>A5VZH8</accession>
<keyword id="KW-0378">Hydrolase</keyword>
<keyword id="KW-0479">Metal-binding</keyword>
<keyword id="KW-0665">Pyrimidine biosynthesis</keyword>
<keyword id="KW-0862">Zinc</keyword>
<reference key="1">
    <citation type="submission" date="2007-05" db="EMBL/GenBank/DDBJ databases">
        <title>Complete sequence of Pseudomonas putida F1.</title>
        <authorList>
            <consortium name="US DOE Joint Genome Institute"/>
            <person name="Copeland A."/>
            <person name="Lucas S."/>
            <person name="Lapidus A."/>
            <person name="Barry K."/>
            <person name="Detter J.C."/>
            <person name="Glavina del Rio T."/>
            <person name="Hammon N."/>
            <person name="Israni S."/>
            <person name="Dalin E."/>
            <person name="Tice H."/>
            <person name="Pitluck S."/>
            <person name="Chain P."/>
            <person name="Malfatti S."/>
            <person name="Shin M."/>
            <person name="Vergez L."/>
            <person name="Schmutz J."/>
            <person name="Larimer F."/>
            <person name="Land M."/>
            <person name="Hauser L."/>
            <person name="Kyrpides N."/>
            <person name="Lykidis A."/>
            <person name="Parales R."/>
            <person name="Richardson P."/>
        </authorList>
    </citation>
    <scope>NUCLEOTIDE SEQUENCE [LARGE SCALE GENOMIC DNA]</scope>
    <source>
        <strain>ATCC 700007 / DSM 6899 / JCM 31910 / BCRC 17059 / LMG 24140 / F1</strain>
    </source>
</reference>
<sequence>MSDRLTLLRPDDWHIHLRDGAVLPHTVGDVARTFARAIIMPNLVPPVRTANEAGAYRERILAARPAGSRFEPLMVLYLTDNISPEDIRAAKASGFVYAAKLYPAGATTNSDSGVTSIDNIFPAIEAMAEVGMPLLVHGEVTRSEIDVFDREKRFIDEHMRRVVERFPTLKVVFEHITTSDAAQFVTEAPANVGATITAQHLLYNRNHMLVGGIRPHFYCLPILKRNTHQVALLDAATSGNPKFFLGTDSAPHARHAKEAACGCAGCYTAYAAIEMYAEAFEQRNALDKLEGFASLHGPAFYGLPANTDTITLVREEWTAPESLPFGEQTVVPLRAGEKLRWRLLEKNA</sequence>
<organism>
    <name type="scientific">Pseudomonas putida (strain ATCC 700007 / DSM 6899 / JCM 31910 / BCRC 17059 / LMG 24140 / F1)</name>
    <dbReference type="NCBI Taxonomy" id="351746"/>
    <lineage>
        <taxon>Bacteria</taxon>
        <taxon>Pseudomonadati</taxon>
        <taxon>Pseudomonadota</taxon>
        <taxon>Gammaproteobacteria</taxon>
        <taxon>Pseudomonadales</taxon>
        <taxon>Pseudomonadaceae</taxon>
        <taxon>Pseudomonas</taxon>
    </lineage>
</organism>
<protein>
    <recommendedName>
        <fullName evidence="1">Dihydroorotase</fullName>
        <shortName evidence="1">DHOase</shortName>
        <ecNumber evidence="1">3.5.2.3</ecNumber>
    </recommendedName>
</protein>
<dbReference type="EC" id="3.5.2.3" evidence="1"/>
<dbReference type="EMBL" id="CP000712">
    <property type="protein sequence ID" value="ABQ77288.1"/>
    <property type="molecule type" value="Genomic_DNA"/>
</dbReference>
<dbReference type="SMR" id="A5VZH8"/>
<dbReference type="MEROPS" id="M38.A02"/>
<dbReference type="KEGG" id="ppf:Pput_1127"/>
<dbReference type="eggNOG" id="COG0418">
    <property type="taxonomic scope" value="Bacteria"/>
</dbReference>
<dbReference type="HOGENOM" id="CLU_041558_1_0_6"/>
<dbReference type="UniPathway" id="UPA00070">
    <property type="reaction ID" value="UER00117"/>
</dbReference>
<dbReference type="GO" id="GO:0005829">
    <property type="term" value="C:cytosol"/>
    <property type="evidence" value="ECO:0007669"/>
    <property type="project" value="TreeGrafter"/>
</dbReference>
<dbReference type="GO" id="GO:0004151">
    <property type="term" value="F:dihydroorotase activity"/>
    <property type="evidence" value="ECO:0007669"/>
    <property type="project" value="UniProtKB-UniRule"/>
</dbReference>
<dbReference type="GO" id="GO:0008270">
    <property type="term" value="F:zinc ion binding"/>
    <property type="evidence" value="ECO:0007669"/>
    <property type="project" value="UniProtKB-UniRule"/>
</dbReference>
<dbReference type="GO" id="GO:0006207">
    <property type="term" value="P:'de novo' pyrimidine nucleobase biosynthetic process"/>
    <property type="evidence" value="ECO:0007669"/>
    <property type="project" value="TreeGrafter"/>
</dbReference>
<dbReference type="GO" id="GO:0044205">
    <property type="term" value="P:'de novo' UMP biosynthetic process"/>
    <property type="evidence" value="ECO:0007669"/>
    <property type="project" value="UniProtKB-UniRule"/>
</dbReference>
<dbReference type="CDD" id="cd01294">
    <property type="entry name" value="DHOase"/>
    <property type="match status" value="1"/>
</dbReference>
<dbReference type="FunFam" id="3.20.20.140:FF:000006">
    <property type="entry name" value="Dihydroorotase"/>
    <property type="match status" value="1"/>
</dbReference>
<dbReference type="Gene3D" id="3.20.20.140">
    <property type="entry name" value="Metal-dependent hydrolases"/>
    <property type="match status" value="1"/>
</dbReference>
<dbReference type="HAMAP" id="MF_00219">
    <property type="entry name" value="PyrC_classII"/>
    <property type="match status" value="1"/>
</dbReference>
<dbReference type="InterPro" id="IPR006680">
    <property type="entry name" value="Amidohydro-rel"/>
</dbReference>
<dbReference type="InterPro" id="IPR004721">
    <property type="entry name" value="DHOdimr"/>
</dbReference>
<dbReference type="InterPro" id="IPR002195">
    <property type="entry name" value="Dihydroorotase_CS"/>
</dbReference>
<dbReference type="InterPro" id="IPR032466">
    <property type="entry name" value="Metal_Hydrolase"/>
</dbReference>
<dbReference type="NCBIfam" id="TIGR00856">
    <property type="entry name" value="pyrC_dimer"/>
    <property type="match status" value="1"/>
</dbReference>
<dbReference type="PANTHER" id="PTHR43137">
    <property type="entry name" value="DIHYDROOROTASE"/>
    <property type="match status" value="1"/>
</dbReference>
<dbReference type="PANTHER" id="PTHR43137:SF1">
    <property type="entry name" value="DIHYDROOROTASE"/>
    <property type="match status" value="1"/>
</dbReference>
<dbReference type="Pfam" id="PF01979">
    <property type="entry name" value="Amidohydro_1"/>
    <property type="match status" value="1"/>
</dbReference>
<dbReference type="PIRSF" id="PIRSF001237">
    <property type="entry name" value="DHOdimr"/>
    <property type="match status" value="1"/>
</dbReference>
<dbReference type="SUPFAM" id="SSF51556">
    <property type="entry name" value="Metallo-dependent hydrolases"/>
    <property type="match status" value="1"/>
</dbReference>
<dbReference type="PROSITE" id="PS00482">
    <property type="entry name" value="DIHYDROOROTASE_1"/>
    <property type="match status" value="1"/>
</dbReference>
<dbReference type="PROSITE" id="PS00483">
    <property type="entry name" value="DIHYDROOROTASE_2"/>
    <property type="match status" value="1"/>
</dbReference>